<reference key="1">
    <citation type="journal article" date="2009" name="BMC Microbiol.">
        <title>The genome sequence of Geobacter metallireducens: features of metabolism, physiology and regulation common and dissimilar to Geobacter sulfurreducens.</title>
        <authorList>
            <person name="Aklujkar M."/>
            <person name="Krushkal J."/>
            <person name="DiBartolo G."/>
            <person name="Lapidus A."/>
            <person name="Land M.L."/>
            <person name="Lovley D.R."/>
        </authorList>
    </citation>
    <scope>NUCLEOTIDE SEQUENCE [LARGE SCALE GENOMIC DNA]</scope>
    <source>
        <strain>ATCC 53774 / DSM 7210 / GS-15</strain>
    </source>
</reference>
<comment type="function">
    <text evidence="1">Plays an essential role in the initiation and regulation of chromosomal replication. ATP-DnaA binds to the origin of replication (oriC) to initiate formation of the DNA replication initiation complex once per cell cycle. Binds the DnaA box (a 9 base pair repeat at the origin) and separates the double-stranded (ds)DNA. Forms a right-handed helical filament on oriC DNA; dsDNA binds to the exterior of the filament while single-stranded (ss)DNA is stabiized in the filament's interior. The ATP-DnaA-oriC complex binds and stabilizes one strand of the AT-rich DNA unwinding element (DUE), permitting loading of DNA polymerase. After initiation quickly degrades to an ADP-DnaA complex that is not apt for DNA replication. Binds acidic phospholipids.</text>
</comment>
<comment type="subunit">
    <text evidence="1">Oligomerizes as a right-handed, spiral filament on DNA at oriC.</text>
</comment>
<comment type="subcellular location">
    <subcellularLocation>
        <location evidence="1">Cytoplasm</location>
    </subcellularLocation>
</comment>
<comment type="domain">
    <text evidence="1">Domain I is involved in oligomerization and binding regulators, domain II is flexibile and of varying length in different bacteria, domain III forms the AAA+ region, while domain IV binds dsDNA.</text>
</comment>
<comment type="similarity">
    <text evidence="1">Belongs to the DnaA family.</text>
</comment>
<sequence length="450" mass="50943">MEDVWLQAQSNLAKVLTHQTFTTWIEPIRFAGAHKNTLLLEAPNQFIRDRVRESYLPMILESVRSLTDSHFQVELQVAARQQEKTAKSPRKSHTEDELGPVESEKCAPAEFSTNLNAKYTFDTFVCGGSNQFAHAAALSVANNPAGKYNPLFIYGGVGLGKTHLLTAIGNQVLTKNRKARVCFYTSEKFMNELINCLRYQKMEQFRNKFRKMDLLLIDDIQFIAGKERTQEEFFHTFNALYESHKQIVVTSDKFPKDIPGLEERLRSRFEWGLIADIQPPDTETKVAILSKKADSDGIRLPDDVALFLASSASTNVRELEGMLIRLGAVASLTGKNITLDMAREVLKDIIVDKTKEVTVEMIQKYVADHFNIKVAELKSDKRLKALVVPRQIAIYLCRDLTKASYPDIGEKFGGKDHSTIIHSVKKVDKLLSQDFELKSTIETLRKGLLN</sequence>
<accession>Q39ZS3</accession>
<organism>
    <name type="scientific">Geobacter metallireducens (strain ATCC 53774 / DSM 7210 / GS-15)</name>
    <dbReference type="NCBI Taxonomy" id="269799"/>
    <lineage>
        <taxon>Bacteria</taxon>
        <taxon>Pseudomonadati</taxon>
        <taxon>Thermodesulfobacteriota</taxon>
        <taxon>Desulfuromonadia</taxon>
        <taxon>Geobacterales</taxon>
        <taxon>Geobacteraceae</taxon>
        <taxon>Geobacter</taxon>
    </lineage>
</organism>
<feature type="chain" id="PRO_1000048649" description="Chromosomal replication initiator protein DnaA">
    <location>
        <begin position="1"/>
        <end position="450"/>
    </location>
</feature>
<feature type="region of interest" description="Domain I, interacts with DnaA modulators" evidence="1">
    <location>
        <begin position="1"/>
        <end position="71"/>
    </location>
</feature>
<feature type="region of interest" description="Domain II" evidence="1">
    <location>
        <begin position="71"/>
        <end position="113"/>
    </location>
</feature>
<feature type="region of interest" description="Disordered" evidence="2">
    <location>
        <begin position="82"/>
        <end position="103"/>
    </location>
</feature>
<feature type="region of interest" description="Domain III, AAA+ region" evidence="1">
    <location>
        <begin position="114"/>
        <end position="330"/>
    </location>
</feature>
<feature type="region of interest" description="Domain IV, binds dsDNA" evidence="1">
    <location>
        <begin position="331"/>
        <end position="450"/>
    </location>
</feature>
<feature type="binding site" evidence="1">
    <location>
        <position position="158"/>
    </location>
    <ligand>
        <name>ATP</name>
        <dbReference type="ChEBI" id="CHEBI:30616"/>
    </ligand>
</feature>
<feature type="binding site" evidence="1">
    <location>
        <position position="160"/>
    </location>
    <ligand>
        <name>ATP</name>
        <dbReference type="ChEBI" id="CHEBI:30616"/>
    </ligand>
</feature>
<feature type="binding site" evidence="1">
    <location>
        <position position="161"/>
    </location>
    <ligand>
        <name>ATP</name>
        <dbReference type="ChEBI" id="CHEBI:30616"/>
    </ligand>
</feature>
<feature type="binding site" evidence="1">
    <location>
        <position position="162"/>
    </location>
    <ligand>
        <name>ATP</name>
        <dbReference type="ChEBI" id="CHEBI:30616"/>
    </ligand>
</feature>
<evidence type="ECO:0000255" key="1">
    <source>
        <dbReference type="HAMAP-Rule" id="MF_00377"/>
    </source>
</evidence>
<evidence type="ECO:0000256" key="2">
    <source>
        <dbReference type="SAM" id="MobiDB-lite"/>
    </source>
</evidence>
<proteinExistence type="inferred from homology"/>
<gene>
    <name evidence="1" type="primary">dnaA</name>
    <name type="ordered locus">Gmet_0001</name>
</gene>
<keyword id="KW-0067">ATP-binding</keyword>
<keyword id="KW-0963">Cytoplasm</keyword>
<keyword id="KW-0235">DNA replication</keyword>
<keyword id="KW-0238">DNA-binding</keyword>
<keyword id="KW-0446">Lipid-binding</keyword>
<keyword id="KW-0547">Nucleotide-binding</keyword>
<keyword id="KW-1185">Reference proteome</keyword>
<dbReference type="EMBL" id="CP000148">
    <property type="protein sequence ID" value="ABB30251.1"/>
    <property type="molecule type" value="Genomic_DNA"/>
</dbReference>
<dbReference type="RefSeq" id="WP_004513720.1">
    <property type="nucleotide sequence ID" value="NC_007517.1"/>
</dbReference>
<dbReference type="SMR" id="Q39ZS3"/>
<dbReference type="STRING" id="269799.Gmet_0001"/>
<dbReference type="KEGG" id="gme:Gmet_0001"/>
<dbReference type="eggNOG" id="COG0593">
    <property type="taxonomic scope" value="Bacteria"/>
</dbReference>
<dbReference type="HOGENOM" id="CLU_026910_3_1_7"/>
<dbReference type="Proteomes" id="UP000007073">
    <property type="component" value="Chromosome"/>
</dbReference>
<dbReference type="GO" id="GO:0005737">
    <property type="term" value="C:cytoplasm"/>
    <property type="evidence" value="ECO:0007669"/>
    <property type="project" value="UniProtKB-SubCell"/>
</dbReference>
<dbReference type="GO" id="GO:0005886">
    <property type="term" value="C:plasma membrane"/>
    <property type="evidence" value="ECO:0007669"/>
    <property type="project" value="TreeGrafter"/>
</dbReference>
<dbReference type="GO" id="GO:0005524">
    <property type="term" value="F:ATP binding"/>
    <property type="evidence" value="ECO:0007669"/>
    <property type="project" value="UniProtKB-UniRule"/>
</dbReference>
<dbReference type="GO" id="GO:0016887">
    <property type="term" value="F:ATP hydrolysis activity"/>
    <property type="evidence" value="ECO:0007669"/>
    <property type="project" value="InterPro"/>
</dbReference>
<dbReference type="GO" id="GO:0003688">
    <property type="term" value="F:DNA replication origin binding"/>
    <property type="evidence" value="ECO:0007669"/>
    <property type="project" value="UniProtKB-UniRule"/>
</dbReference>
<dbReference type="GO" id="GO:0008289">
    <property type="term" value="F:lipid binding"/>
    <property type="evidence" value="ECO:0007669"/>
    <property type="project" value="UniProtKB-KW"/>
</dbReference>
<dbReference type="GO" id="GO:0006270">
    <property type="term" value="P:DNA replication initiation"/>
    <property type="evidence" value="ECO:0007669"/>
    <property type="project" value="UniProtKB-UniRule"/>
</dbReference>
<dbReference type="GO" id="GO:0006275">
    <property type="term" value="P:regulation of DNA replication"/>
    <property type="evidence" value="ECO:0007669"/>
    <property type="project" value="UniProtKB-UniRule"/>
</dbReference>
<dbReference type="CDD" id="cd00009">
    <property type="entry name" value="AAA"/>
    <property type="match status" value="1"/>
</dbReference>
<dbReference type="CDD" id="cd06571">
    <property type="entry name" value="Bac_DnaA_C"/>
    <property type="match status" value="1"/>
</dbReference>
<dbReference type="FunFam" id="1.10.8.60:FF:000003">
    <property type="entry name" value="Chromosomal replication initiator protein DnaA"/>
    <property type="match status" value="1"/>
</dbReference>
<dbReference type="FunFam" id="3.40.50.300:FF:000150">
    <property type="entry name" value="Chromosomal replication initiator protein DnaA"/>
    <property type="match status" value="1"/>
</dbReference>
<dbReference type="Gene3D" id="1.10.1750.10">
    <property type="match status" value="1"/>
</dbReference>
<dbReference type="Gene3D" id="1.10.8.60">
    <property type="match status" value="1"/>
</dbReference>
<dbReference type="Gene3D" id="3.30.300.180">
    <property type="match status" value="1"/>
</dbReference>
<dbReference type="Gene3D" id="3.40.50.300">
    <property type="entry name" value="P-loop containing nucleotide triphosphate hydrolases"/>
    <property type="match status" value="1"/>
</dbReference>
<dbReference type="HAMAP" id="MF_00377">
    <property type="entry name" value="DnaA_bact"/>
    <property type="match status" value="1"/>
</dbReference>
<dbReference type="InterPro" id="IPR003593">
    <property type="entry name" value="AAA+_ATPase"/>
</dbReference>
<dbReference type="InterPro" id="IPR001957">
    <property type="entry name" value="Chromosome_initiator_DnaA"/>
</dbReference>
<dbReference type="InterPro" id="IPR020591">
    <property type="entry name" value="Chromosome_initiator_DnaA-like"/>
</dbReference>
<dbReference type="InterPro" id="IPR018312">
    <property type="entry name" value="Chromosome_initiator_DnaA_CS"/>
</dbReference>
<dbReference type="InterPro" id="IPR013159">
    <property type="entry name" value="DnaA_C"/>
</dbReference>
<dbReference type="InterPro" id="IPR013317">
    <property type="entry name" value="DnaA_dom"/>
</dbReference>
<dbReference type="InterPro" id="IPR024633">
    <property type="entry name" value="DnaA_N_dom"/>
</dbReference>
<dbReference type="InterPro" id="IPR038454">
    <property type="entry name" value="DnaA_N_sf"/>
</dbReference>
<dbReference type="InterPro" id="IPR027417">
    <property type="entry name" value="P-loop_NTPase"/>
</dbReference>
<dbReference type="InterPro" id="IPR010921">
    <property type="entry name" value="Trp_repressor/repl_initiator"/>
</dbReference>
<dbReference type="NCBIfam" id="TIGR00362">
    <property type="entry name" value="DnaA"/>
    <property type="match status" value="1"/>
</dbReference>
<dbReference type="PANTHER" id="PTHR30050">
    <property type="entry name" value="CHROMOSOMAL REPLICATION INITIATOR PROTEIN DNAA"/>
    <property type="match status" value="1"/>
</dbReference>
<dbReference type="PANTHER" id="PTHR30050:SF2">
    <property type="entry name" value="CHROMOSOMAL REPLICATION INITIATOR PROTEIN DNAA"/>
    <property type="match status" value="1"/>
</dbReference>
<dbReference type="Pfam" id="PF00308">
    <property type="entry name" value="Bac_DnaA"/>
    <property type="match status" value="1"/>
</dbReference>
<dbReference type="Pfam" id="PF08299">
    <property type="entry name" value="Bac_DnaA_C"/>
    <property type="match status" value="1"/>
</dbReference>
<dbReference type="Pfam" id="PF11638">
    <property type="entry name" value="DnaA_N"/>
    <property type="match status" value="1"/>
</dbReference>
<dbReference type="PRINTS" id="PR00051">
    <property type="entry name" value="DNAA"/>
</dbReference>
<dbReference type="SMART" id="SM00382">
    <property type="entry name" value="AAA"/>
    <property type="match status" value="1"/>
</dbReference>
<dbReference type="SMART" id="SM00760">
    <property type="entry name" value="Bac_DnaA_C"/>
    <property type="match status" value="1"/>
</dbReference>
<dbReference type="SUPFAM" id="SSF52540">
    <property type="entry name" value="P-loop containing nucleoside triphosphate hydrolases"/>
    <property type="match status" value="1"/>
</dbReference>
<dbReference type="SUPFAM" id="SSF48295">
    <property type="entry name" value="TrpR-like"/>
    <property type="match status" value="1"/>
</dbReference>
<dbReference type="PROSITE" id="PS01008">
    <property type="entry name" value="DNAA"/>
    <property type="match status" value="1"/>
</dbReference>
<protein>
    <recommendedName>
        <fullName evidence="1">Chromosomal replication initiator protein DnaA</fullName>
    </recommendedName>
</protein>
<name>DNAA_GEOMG</name>